<sequence>MSVFLCFLVLLPLILIFLNVLKPSKYKLPPGPKKLPIIGNLHQRRTLHPRNRRNLAEMYGPVALLQYGFVPVVAISSKEAAEEVLKINDLECCSRPEAAGMRATFYNFKDIGMAPFGDEWSLMRKLSVVELFSVKKLQSFKYIIEEENNLCVKKLSEFATRQSPVNLERAIFTLVGNIVCRIGYGINLYECDFFEADRVVDLVLKAEAVIRETVFSDFFPGRIGRFIDCISGQNRRLKNNFSVVDTFFQNVLNEHLKPGRESSTIVDLMIDMKKKQENDGDALKFTTDHLKGMISDIFVAGIGGVAGITLWGMTELIRNPRVMKKVQDEIRTTLGDKKERIKEEDLNQLHYFKLVVKETLRLHPTTPLLLPRQTMSHIKIQGYDVPAKTQILVNVYAMGRDPKLWENADEFNPDRFLDSSVDFKGKNYEFIPFGSGRRICPGMTMGTILVEMALLNLLYFFDWGLAKQEEAKEIINGEENFLAFFQVLHH</sequence>
<accession>Q9LW27</accession>
<accession>Q541X4</accession>
<protein>
    <recommendedName>
        <fullName>Bifunctional dihydrocamalexate synthase/camalexin synthase</fullName>
        <ecNumber evidence="8 16">1.14.19.52</ecNumber>
    </recommendedName>
    <alternativeName>
        <fullName>Cytochrome P450 71B15</fullName>
    </alternativeName>
    <alternativeName>
        <fullName>Dihydrocamalexate:NADP(+) oxidoreductase (decarboxylating)</fullName>
    </alternativeName>
    <alternativeName>
        <fullName>Protein PHYTOALEXIN DEFICIENT 3</fullName>
    </alternativeName>
</protein>
<evidence type="ECO:0000255" key="1"/>
<evidence type="ECO:0000269" key="2">
    <source>
    </source>
</evidence>
<evidence type="ECO:0000269" key="3">
    <source>
    </source>
</evidence>
<evidence type="ECO:0000269" key="4">
    <source>
    </source>
</evidence>
<evidence type="ECO:0000269" key="5">
    <source>
    </source>
</evidence>
<evidence type="ECO:0000269" key="6">
    <source>
    </source>
</evidence>
<evidence type="ECO:0000269" key="7">
    <source>
    </source>
</evidence>
<evidence type="ECO:0000269" key="8">
    <source>
    </source>
</evidence>
<evidence type="ECO:0000269" key="9">
    <source>
    </source>
</evidence>
<evidence type="ECO:0000269" key="10">
    <source>
    </source>
</evidence>
<evidence type="ECO:0000269" key="11">
    <source>
    </source>
</evidence>
<evidence type="ECO:0000269" key="12">
    <source>
    </source>
</evidence>
<evidence type="ECO:0000269" key="13">
    <source>
    </source>
</evidence>
<evidence type="ECO:0000269" key="14">
    <source>
    </source>
</evidence>
<evidence type="ECO:0000269" key="15">
    <source>
    </source>
</evidence>
<evidence type="ECO:0000269" key="16">
    <source>
    </source>
</evidence>
<evidence type="ECO:0000269" key="17">
    <source>
    </source>
</evidence>
<evidence type="ECO:0000269" key="18">
    <source>
    </source>
</evidence>
<evidence type="ECO:0000305" key="19"/>
<evidence type="ECO:0000305" key="20">
    <source>
    </source>
</evidence>
<evidence type="ECO:0000305" key="21">
    <source>
    </source>
</evidence>
<comment type="function">
    <text evidence="2 3 4 5 6 7 8 10 11 12 15 16 17 18">Multifunctional enzyme involved in the biosynthesis of the indole-derived phytoalexin camalexin. Catalyzes two reactions, the formation of dihydrocamalexate from indole-3-acetonitrile-cysteine conjugate and the oxidative decarboxylation of dihydrocamalexate which is the final step in camalexin biosynthesis. Required for the resistance to the fungal pathogens A.brassicicola, B.cinerea, B.elliptica, B.tulipae, L.maculans and Colletotrichum higginsianum. Seems not to be required for resistance to P.syringae, P.porri, and not involved in age-related resistance.</text>
</comment>
<comment type="catalytic activity">
    <reaction evidence="8 16">
        <text>2-(L-cystein-S-yl)-2-(1H-indol-3-yl)-acetonitrile + 2 reduced [NADPH--hemoprotein reductase] + 2 O2 = camalexin + hydrogen cyanide + 2 oxidized [NADPH--hemoprotein reductase] + CO2 + 4 H2O + 2 H(+)</text>
        <dbReference type="Rhea" id="RHEA:52776"/>
        <dbReference type="Rhea" id="RHEA-COMP:11964"/>
        <dbReference type="Rhea" id="RHEA-COMP:11965"/>
        <dbReference type="ChEBI" id="CHEBI:15377"/>
        <dbReference type="ChEBI" id="CHEBI:15378"/>
        <dbReference type="ChEBI" id="CHEBI:15379"/>
        <dbReference type="ChEBI" id="CHEBI:16526"/>
        <dbReference type="ChEBI" id="CHEBI:18407"/>
        <dbReference type="ChEBI" id="CHEBI:22990"/>
        <dbReference type="ChEBI" id="CHEBI:57618"/>
        <dbReference type="ChEBI" id="CHEBI:58210"/>
        <dbReference type="ChEBI" id="CHEBI:79191"/>
        <dbReference type="EC" id="1.14.19.52"/>
    </reaction>
    <physiologicalReaction direction="left-to-right" evidence="20 21">
        <dbReference type="Rhea" id="RHEA:52777"/>
    </physiologicalReaction>
</comment>
<comment type="catalytic activity">
    <reaction evidence="8 16">
        <text>2-(L-cystein-S-yl)-2-(1H-indol-3-yl)-acetonitrile + reduced [NADPH--hemoprotein reductase] + O2 = (R)-dihydrocamalexate + hydrogen cyanide + oxidized [NADPH--hemoprotein reductase] + 2 H2O + 2 H(+)</text>
        <dbReference type="Rhea" id="RHEA:10452"/>
        <dbReference type="Rhea" id="RHEA-COMP:11964"/>
        <dbReference type="Rhea" id="RHEA-COMP:11965"/>
        <dbReference type="ChEBI" id="CHEBI:15377"/>
        <dbReference type="ChEBI" id="CHEBI:15378"/>
        <dbReference type="ChEBI" id="CHEBI:15379"/>
        <dbReference type="ChEBI" id="CHEBI:18407"/>
        <dbReference type="ChEBI" id="CHEBI:57618"/>
        <dbReference type="ChEBI" id="CHEBI:58210"/>
        <dbReference type="ChEBI" id="CHEBI:79191"/>
        <dbReference type="ChEBI" id="CHEBI:79200"/>
    </reaction>
    <physiologicalReaction direction="left-to-right" evidence="20 21">
        <dbReference type="Rhea" id="RHEA:10453"/>
    </physiologicalReaction>
</comment>
<comment type="catalytic activity">
    <reaction evidence="8 16">
        <text>(R)-dihydrocamalexate + reduced [NADPH--hemoprotein reductase] + O2 = camalexin + oxidized [NADPH--hemoprotein reductase] + CO2 + 2 H2O</text>
        <dbReference type="Rhea" id="RHEA:34807"/>
        <dbReference type="Rhea" id="RHEA-COMP:11964"/>
        <dbReference type="Rhea" id="RHEA-COMP:11965"/>
        <dbReference type="ChEBI" id="CHEBI:15377"/>
        <dbReference type="ChEBI" id="CHEBI:15379"/>
        <dbReference type="ChEBI" id="CHEBI:16526"/>
        <dbReference type="ChEBI" id="CHEBI:22990"/>
        <dbReference type="ChEBI" id="CHEBI:57618"/>
        <dbReference type="ChEBI" id="CHEBI:58210"/>
        <dbReference type="ChEBI" id="CHEBI:79200"/>
    </reaction>
    <physiologicalReaction direction="left-to-right" evidence="20 21">
        <dbReference type="Rhea" id="RHEA:34808"/>
    </physiologicalReaction>
</comment>
<comment type="interaction">
    <interactant intactId="EBI-16915951">
        <id>Q9LW27</id>
    </interactant>
    <interactant intactId="EBI-30855500">
        <id>O49340</id>
        <label>CYP71A12</label>
    </interactant>
    <organismsDiffer>false</organismsDiffer>
    <experiments>5</experiments>
</comment>
<comment type="interaction">
    <interactant intactId="EBI-16915951">
        <id>Q9LW27</id>
    </interactant>
    <interactant intactId="EBI-2356153">
        <id>O49342</id>
        <label>CYP71A13</label>
    </interactant>
    <organismsDiffer>false</organismsDiffer>
    <experiments>5</experiments>
</comment>
<comment type="subcellular location">
    <subcellularLocation>
        <location evidence="19">Membrane</location>
        <topology evidence="19">Single-pass membrane protein</topology>
    </subcellularLocation>
</comment>
<comment type="induction">
    <text evidence="3 8 9 10 11 13 14 15">By salicylic acid, flagellin, oligogalacturonides, silver nitrate, UV-C and infection with A.alternata and various strains of P.syringae. Activated by the transcription factor WRKY33 upon infection with P.syringae.</text>
</comment>
<comment type="disruption phenotype">
    <text evidence="2 6 18">No visible phenotype under normal growth conditions, but deficient in the phytoalexin camalexin accumulation upon bacterial infection and markedly increased susceptibility to infection by the necrotrophic fungus Alternaria brassicicola.</text>
</comment>
<comment type="similarity">
    <text evidence="19">Belongs to the cytochrome P450 family.</text>
</comment>
<organism>
    <name type="scientific">Arabidopsis thaliana</name>
    <name type="common">Mouse-ear cress</name>
    <dbReference type="NCBI Taxonomy" id="3702"/>
    <lineage>
        <taxon>Eukaryota</taxon>
        <taxon>Viridiplantae</taxon>
        <taxon>Streptophyta</taxon>
        <taxon>Embryophyta</taxon>
        <taxon>Tracheophyta</taxon>
        <taxon>Spermatophyta</taxon>
        <taxon>Magnoliopsida</taxon>
        <taxon>eudicotyledons</taxon>
        <taxon>Gunneridae</taxon>
        <taxon>Pentapetalae</taxon>
        <taxon>rosids</taxon>
        <taxon>malvids</taxon>
        <taxon>Brassicales</taxon>
        <taxon>Brassicaceae</taxon>
        <taxon>Camelineae</taxon>
        <taxon>Arabidopsis</taxon>
    </lineage>
</organism>
<proteinExistence type="evidence at protein level"/>
<keyword id="KW-0472">Membrane</keyword>
<keyword id="KW-0521">NADP</keyword>
<keyword id="KW-0560">Oxidoreductase</keyword>
<keyword id="KW-0611">Plant defense</keyword>
<keyword id="KW-1185">Reference proteome</keyword>
<keyword id="KW-0812">Transmembrane</keyword>
<keyword id="KW-1133">Transmembrane helix</keyword>
<gene>
    <name type="primary">CYP71B15</name>
    <name type="synonym">PAD3</name>
    <name type="ordered locus">At3g26830</name>
    <name type="ORF">MDJ14.15</name>
</gene>
<dbReference type="EC" id="1.14.19.52" evidence="8 16"/>
<dbReference type="EMBL" id="AB016889">
    <property type="protein sequence ID" value="BAB01230.1"/>
    <property type="molecule type" value="Genomic_DNA"/>
</dbReference>
<dbReference type="EMBL" id="CP002686">
    <property type="protein sequence ID" value="AEE77220.1"/>
    <property type="molecule type" value="Genomic_DNA"/>
</dbReference>
<dbReference type="EMBL" id="AK117967">
    <property type="protein sequence ID" value="BAC42604.1"/>
    <property type="molecule type" value="mRNA"/>
</dbReference>
<dbReference type="RefSeq" id="NP_189318.1">
    <property type="nucleotide sequence ID" value="NM_113595.4"/>
</dbReference>
<dbReference type="SMR" id="Q9LW27"/>
<dbReference type="BioGRID" id="7628">
    <property type="interactions" value="3"/>
</dbReference>
<dbReference type="ComplexPortal" id="CPX-2833">
    <property type="entry name" value="Camalexin biosynthetic metabolon complex"/>
</dbReference>
<dbReference type="FunCoup" id="Q9LW27">
    <property type="interactions" value="384"/>
</dbReference>
<dbReference type="IntAct" id="Q9LW27">
    <property type="interactions" value="60"/>
</dbReference>
<dbReference type="STRING" id="3702.Q9LW27"/>
<dbReference type="PaxDb" id="3702-AT3G26830.1"/>
<dbReference type="ProteomicsDB" id="240527"/>
<dbReference type="EnsemblPlants" id="AT3G26830.1">
    <property type="protein sequence ID" value="AT3G26830.1"/>
    <property type="gene ID" value="AT3G26830"/>
</dbReference>
<dbReference type="GeneID" id="822298"/>
<dbReference type="Gramene" id="AT3G26830.1">
    <property type="protein sequence ID" value="AT3G26830.1"/>
    <property type="gene ID" value="AT3G26830"/>
</dbReference>
<dbReference type="KEGG" id="ath:AT3G26830"/>
<dbReference type="Araport" id="AT3G26830"/>
<dbReference type="TAIR" id="AT3G26830">
    <property type="gene designation" value="PAD3"/>
</dbReference>
<dbReference type="eggNOG" id="KOG0156">
    <property type="taxonomic scope" value="Eukaryota"/>
</dbReference>
<dbReference type="HOGENOM" id="CLU_001570_4_1_1"/>
<dbReference type="InParanoid" id="Q9LW27"/>
<dbReference type="OMA" id="INDLECC"/>
<dbReference type="OrthoDB" id="2789670at2759"/>
<dbReference type="PhylomeDB" id="Q9LW27"/>
<dbReference type="BioCyc" id="ARA:AT3G26830-MONOMER"/>
<dbReference type="BioCyc" id="MetaCyc:AT3G26830-MONOMER"/>
<dbReference type="BRENDA" id="1.14.19.52">
    <property type="organism ID" value="399"/>
</dbReference>
<dbReference type="PRO" id="PR:Q9LW27"/>
<dbReference type="Proteomes" id="UP000006548">
    <property type="component" value="Chromosome 3"/>
</dbReference>
<dbReference type="ExpressionAtlas" id="Q9LW27">
    <property type="expression patterns" value="baseline and differential"/>
</dbReference>
<dbReference type="GO" id="GO:0005783">
    <property type="term" value="C:endoplasmic reticulum"/>
    <property type="evidence" value="ECO:0007005"/>
    <property type="project" value="TAIR"/>
</dbReference>
<dbReference type="GO" id="GO:0043231">
    <property type="term" value="C:intracellular membrane-bounded organelle"/>
    <property type="evidence" value="ECO:0000314"/>
    <property type="project" value="TAIR"/>
</dbReference>
<dbReference type="GO" id="GO:0016020">
    <property type="term" value="C:membrane"/>
    <property type="evidence" value="ECO:0007669"/>
    <property type="project" value="UniProtKB-SubCell"/>
</dbReference>
<dbReference type="GO" id="GO:0010298">
    <property type="term" value="F:dihydrocamalexic acid decarboxylase activity"/>
    <property type="evidence" value="ECO:0000314"/>
    <property type="project" value="TAIR"/>
</dbReference>
<dbReference type="GO" id="GO:0020037">
    <property type="term" value="F:heme binding"/>
    <property type="evidence" value="ECO:0007669"/>
    <property type="project" value="InterPro"/>
</dbReference>
<dbReference type="GO" id="GO:0005506">
    <property type="term" value="F:iron ion binding"/>
    <property type="evidence" value="ECO:0007669"/>
    <property type="project" value="InterPro"/>
</dbReference>
<dbReference type="GO" id="GO:0004497">
    <property type="term" value="F:monooxygenase activity"/>
    <property type="evidence" value="ECO:0000250"/>
    <property type="project" value="TAIR"/>
</dbReference>
<dbReference type="GO" id="GO:0016705">
    <property type="term" value="F:oxidoreductase activity, acting on paired donors, with incorporation or reduction of molecular oxygen"/>
    <property type="evidence" value="ECO:0007669"/>
    <property type="project" value="InterPro"/>
</dbReference>
<dbReference type="GO" id="GO:0010120">
    <property type="term" value="P:camalexin biosynthetic process"/>
    <property type="evidence" value="ECO:0000314"/>
    <property type="project" value="TAIR"/>
</dbReference>
<dbReference type="GO" id="GO:0006952">
    <property type="term" value="P:defense response"/>
    <property type="evidence" value="ECO:0000315"/>
    <property type="project" value="TAIR"/>
</dbReference>
<dbReference type="GO" id="GO:0050832">
    <property type="term" value="P:defense response to fungus"/>
    <property type="evidence" value="ECO:0000315"/>
    <property type="project" value="TAIR"/>
</dbReference>
<dbReference type="GO" id="GO:0009700">
    <property type="term" value="P:indole phytoalexin biosynthetic process"/>
    <property type="evidence" value="ECO:0000315"/>
    <property type="project" value="TAIR"/>
</dbReference>
<dbReference type="GO" id="GO:0010112">
    <property type="term" value="P:regulation of systemic acquired resistance"/>
    <property type="evidence" value="ECO:0000270"/>
    <property type="project" value="TAIR"/>
</dbReference>
<dbReference type="GO" id="GO:0009737">
    <property type="term" value="P:response to abscisic acid"/>
    <property type="evidence" value="ECO:0000270"/>
    <property type="project" value="TAIR"/>
</dbReference>
<dbReference type="GO" id="GO:0009617">
    <property type="term" value="P:response to bacterium"/>
    <property type="evidence" value="ECO:0000315"/>
    <property type="project" value="TAIR"/>
</dbReference>
<dbReference type="GO" id="GO:0009625">
    <property type="term" value="P:response to insect"/>
    <property type="evidence" value="ECO:0000270"/>
    <property type="project" value="TAIR"/>
</dbReference>
<dbReference type="GO" id="GO:0009414">
    <property type="term" value="P:response to water deprivation"/>
    <property type="evidence" value="ECO:0000270"/>
    <property type="project" value="TAIR"/>
</dbReference>
<dbReference type="CDD" id="cd11072">
    <property type="entry name" value="CYP71-like"/>
    <property type="match status" value="1"/>
</dbReference>
<dbReference type="FunFam" id="1.10.630.10:FF:000011">
    <property type="entry name" value="Cytochrome P450 83B1"/>
    <property type="match status" value="1"/>
</dbReference>
<dbReference type="Gene3D" id="1.10.630.10">
    <property type="entry name" value="Cytochrome P450"/>
    <property type="match status" value="1"/>
</dbReference>
<dbReference type="InterPro" id="IPR001128">
    <property type="entry name" value="Cyt_P450"/>
</dbReference>
<dbReference type="InterPro" id="IPR017972">
    <property type="entry name" value="Cyt_P450_CS"/>
</dbReference>
<dbReference type="InterPro" id="IPR002401">
    <property type="entry name" value="Cyt_P450_E_grp-I"/>
</dbReference>
<dbReference type="InterPro" id="IPR036396">
    <property type="entry name" value="Cyt_P450_sf"/>
</dbReference>
<dbReference type="InterPro" id="IPR050193">
    <property type="entry name" value="Cytochrome_P450_71"/>
</dbReference>
<dbReference type="PANTHER" id="PTHR47956:SF50">
    <property type="entry name" value="BIFUNCTIONAL DIHYDROCAMALEXATE SYNTHASE_CAMALEXIN SYNTHASE-RELATED"/>
    <property type="match status" value="1"/>
</dbReference>
<dbReference type="PANTHER" id="PTHR47956">
    <property type="entry name" value="CYTOCHROME P450 71B11-RELATED"/>
    <property type="match status" value="1"/>
</dbReference>
<dbReference type="Pfam" id="PF00067">
    <property type="entry name" value="p450"/>
    <property type="match status" value="1"/>
</dbReference>
<dbReference type="PRINTS" id="PR00463">
    <property type="entry name" value="EP450I"/>
</dbReference>
<dbReference type="PRINTS" id="PR00385">
    <property type="entry name" value="P450"/>
</dbReference>
<dbReference type="SUPFAM" id="SSF48264">
    <property type="entry name" value="Cytochrome P450"/>
    <property type="match status" value="1"/>
</dbReference>
<dbReference type="PROSITE" id="PS00086">
    <property type="entry name" value="CYTOCHROME_P450"/>
    <property type="match status" value="1"/>
</dbReference>
<reference key="1">
    <citation type="journal article" date="2000" name="DNA Res.">
        <title>Structural analysis of Arabidopsis thaliana chromosome 3. I. Sequence features of the regions of 4,504,864 bp covered by sixty P1 and TAC clones.</title>
        <authorList>
            <person name="Sato S."/>
            <person name="Nakamura Y."/>
            <person name="Kaneko T."/>
            <person name="Katoh T."/>
            <person name="Asamizu E."/>
            <person name="Tabata S."/>
        </authorList>
    </citation>
    <scope>NUCLEOTIDE SEQUENCE [LARGE SCALE GENOMIC DNA]</scope>
    <source>
        <strain>cv. Columbia</strain>
    </source>
</reference>
<reference key="2">
    <citation type="journal article" date="2017" name="Plant J.">
        <title>Araport11: a complete reannotation of the Arabidopsis thaliana reference genome.</title>
        <authorList>
            <person name="Cheng C.Y."/>
            <person name="Krishnakumar V."/>
            <person name="Chan A.P."/>
            <person name="Thibaud-Nissen F."/>
            <person name="Schobel S."/>
            <person name="Town C.D."/>
        </authorList>
    </citation>
    <scope>GENOME REANNOTATION</scope>
    <source>
        <strain>cv. Columbia</strain>
    </source>
</reference>
<reference key="3">
    <citation type="journal article" date="2002" name="Science">
        <title>Functional annotation of a full-length Arabidopsis cDNA collection.</title>
        <authorList>
            <person name="Seki M."/>
            <person name="Narusaka M."/>
            <person name="Kamiya A."/>
            <person name="Ishida J."/>
            <person name="Satou M."/>
            <person name="Sakurai T."/>
            <person name="Nakajima M."/>
            <person name="Enju A."/>
            <person name="Akiyama K."/>
            <person name="Oono Y."/>
            <person name="Muramatsu M."/>
            <person name="Hayashizaki Y."/>
            <person name="Kawai J."/>
            <person name="Carninci P."/>
            <person name="Itoh M."/>
            <person name="Ishii Y."/>
            <person name="Arakawa T."/>
            <person name="Shibata K."/>
            <person name="Shinagawa A."/>
            <person name="Shinozaki K."/>
        </authorList>
    </citation>
    <scope>NUCLEOTIDE SEQUENCE [LARGE SCALE MRNA]</scope>
    <source>
        <strain>cv. Columbia</strain>
    </source>
</reference>
<reference key="4">
    <citation type="journal article" date="1994" name="Proc. Natl. Acad. Sci. U.S.A.">
        <title>Isolation of phytoalexin-deficient mutants of Arabidopsis thaliana and characterization of their interactions with bacterial pathogens.</title>
        <authorList>
            <person name="Glazebrook J."/>
            <person name="Ausubel F.M."/>
        </authorList>
    </citation>
    <scope>FUNCTION</scope>
    <scope>DISRUPTION PHENOTYPE</scope>
</reference>
<reference key="5">
    <citation type="journal article" date="1999" name="Plant J.">
        <title>Deficiency in phytoalexin production causes enhanced susceptibility of Arabidopsis thaliana to the fungus Alternaria brassicicola.</title>
        <authorList>
            <person name="Thomma B.P."/>
            <person name="Nelissen I."/>
            <person name="Eggermont K."/>
            <person name="Broekaert W.F."/>
        </authorList>
    </citation>
    <scope>FUNCTION</scope>
    <scope>DISRUPTION PHENOTYPE</scope>
</reference>
<reference key="6">
    <citation type="journal article" date="1999" name="Plant Cell">
        <title>Arabidopsis PAD3, a gene required for camalexin biosynthesis, encodes a putative cytochrome P450 monooxygenase.</title>
        <authorList>
            <person name="Zhou N."/>
            <person name="Tootle T.L."/>
            <person name="Glazebrook J."/>
        </authorList>
    </citation>
    <scope>FUNCTION</scope>
    <scope>INDUCTION</scope>
    <scope>MUTAGENESIS OF GLY-176</scope>
</reference>
<reference key="7">
    <citation type="journal article" date="2001" name="Plant J.">
        <title>Characterization of an Arabidopsis-Phytophthora pathosystem: resistance requires a functional PAD2 gene and is independent of salicylic acid, ethylene and jasmonic acid signalling.</title>
        <authorList>
            <person name="Roetschi A."/>
            <person name="Si-Ammour A."/>
            <person name="Belbahri L."/>
            <person name="Mauch F."/>
            <person name="Mauch-Mani B."/>
        </authorList>
    </citation>
    <scope>FUNCTION</scope>
</reference>
<reference key="8">
    <citation type="journal article" date="2002" name="Plant Cell">
        <title>Age-related resistance in Arabidopsis is a developmentally regulated defense response to Pseudomonas syringae.</title>
        <authorList>
            <person name="Kus J.V."/>
            <person name="Zaton K."/>
            <person name="Sarkar R."/>
            <person name="Cameron R.K."/>
        </authorList>
    </citation>
    <scope>FUNCTION</scope>
</reference>
<reference key="9">
    <citation type="journal article" date="2003" name="Plant J.">
        <title>Arabidopsis local resistance to Botrytis cinerea involves salicylic acid and camalexin and requires EDS4 and PAD2, but not SID2, EDS5 or PAD4.</title>
        <authorList>
            <person name="Ferrari S."/>
            <person name="Plotnikova J.M."/>
            <person name="De Lorenzo G."/>
            <person name="Ausubel F.M."/>
        </authorList>
    </citation>
    <scope>FUNCTION</scope>
    <scope>DISRUPTION PHENOTYPE</scope>
</reference>
<reference key="10">
    <citation type="journal article" date="2004" name="Plant J.">
        <title>Characterisation of an Arabidopsis-Leptosphaeria maculans pathosystem: resistance partially requires camalexin biosynthesis and is independent of salicylic acid, ethylene and jasmonic acid signalling.</title>
        <authorList>
            <person name="Bohman S."/>
            <person name="Staal J."/>
            <person name="Thomma B.P."/>
            <person name="Wang M."/>
            <person name="Dixelius C."/>
        </authorList>
    </citation>
    <scope>FUNCTION</scope>
</reference>
<reference key="11">
    <citation type="journal article" date="2007" name="J. Plant Physiol.">
        <title>Regulatory variability of camalexin biosynthesis.</title>
        <authorList>
            <person name="Schuhegger R."/>
            <person name="Rauhut T."/>
            <person name="Glawischnig E."/>
        </authorList>
    </citation>
    <scope>INDUCTION</scope>
</reference>
<reference key="12">
    <citation type="journal article" date="2006" name="Plant Physiol.">
        <title>CYP71B15 (PAD3) catalyzes the final step in camalexin biosynthesis.</title>
        <authorList>
            <person name="Schuhegger R."/>
            <person name="Nafisi M."/>
            <person name="Mansourova M."/>
            <person name="Petersen B.L."/>
            <person name="Olsen C.E."/>
            <person name="Svatos A."/>
            <person name="Halkier B.A."/>
            <person name="Glawischnig E."/>
        </authorList>
    </citation>
    <scope>FUNCTION</scope>
    <scope>CATALYTIC ACTIVITY</scope>
    <scope>BIOPHYSICOCHEMICAL PROPERTIES</scope>
    <scope>INDUCTION</scope>
</reference>
<reference key="13">
    <citation type="journal article" date="2007" name="Mol. Plant Pathol.">
        <title>Histochemical and genetic analysis of host and non-host interactions of Arabidopsis with three Botrytis species: an important role for cell death control.</title>
        <authorList>
            <person name="van Baarlen P."/>
            <person name="Woltering E.J."/>
            <person name="Staats M."/>
            <person name="van Kan J.A."/>
        </authorList>
    </citation>
    <scope>FUNCTION</scope>
</reference>
<reference key="14">
    <citation type="journal article" date="2007" name="Plant Cell">
        <title>Arabidopsis cytochrome P450 monooxygenase 71A13 catalyzes the conversion of indole-3-acetaldoxime in camalexin synthesis.</title>
        <authorList>
            <person name="Nafisi M."/>
            <person name="Goregaoker S."/>
            <person name="Botanga C.J."/>
            <person name="Glawischnig E."/>
            <person name="Olsen C.E."/>
            <person name="Halkier B.A."/>
            <person name="Glazebrook J."/>
        </authorList>
    </citation>
    <scope>FUNCTION</scope>
    <scope>INDUCTION</scope>
</reference>
<reference key="15">
    <citation type="journal article" date="2007" name="Plant Physiol.">
        <title>Resistance to Botrytis cinerea induced in Arabidopsis by elicitors is independent of salicylic acid, ethylene, or jasmonate signaling but requires PHYTOALEXIN DEFICIENT3.</title>
        <authorList>
            <person name="Ferrari S."/>
            <person name="Galletti R."/>
            <person name="Denoux C."/>
            <person name="De Lorenzo G."/>
            <person name="Ausubel F.M."/>
            <person name="Dewdney J."/>
        </authorList>
    </citation>
    <scope>FUNCTION</scope>
    <scope>INDUCTION</scope>
</reference>
<reference key="16">
    <citation type="journal article" date="2008" name="EMBO J.">
        <title>Arabidopsis MAP kinase 4 regulates gene expression through transcription factor release in the nucleus.</title>
        <authorList>
            <person name="Qiu J.L."/>
            <person name="Fiil B.K."/>
            <person name="Petersen K."/>
            <person name="Nielsen H.B."/>
            <person name="Botanga C.J."/>
            <person name="Thorgrimsen S."/>
            <person name="Palma K."/>
            <person name="Suarez-Rodriguez M.C."/>
            <person name="Sandbech-Clausen S."/>
            <person name="Lichota J."/>
            <person name="Brodersen P."/>
            <person name="Grasser K.D."/>
            <person name="Mattsson O."/>
            <person name="Glazebrook J."/>
            <person name="Mundy J."/>
            <person name="Petersen M."/>
        </authorList>
    </citation>
    <scope>INDUCTION</scope>
</reference>
<reference key="17">
    <citation type="journal article" date="2008" name="Plant Physiol.">
        <title>The AtrbohD-mediated oxidative burst elicited by oligogalacturonides in Arabidopsis is dispensable for the activation of defense responses effective against Botrytis cinerea.</title>
        <authorList>
            <person name="Galletti R."/>
            <person name="Denoux C."/>
            <person name="Gambetta S."/>
            <person name="Dewdney J."/>
            <person name="Ausubel F.M."/>
            <person name="De Lorenzo G."/>
            <person name="Ferrari S."/>
        </authorList>
    </citation>
    <scope>INDUCTION BY OLIGOGALACTURONIDES</scope>
</reference>
<reference key="18">
    <citation type="journal article" date="2008" name="Plant Physiol.">
        <title>Glycerol-3-phosphate levels are associated with basal resistance to the hemibiotrophic fungus Colletotrichum higginsianum in Arabidopsis.</title>
        <authorList>
            <person name="Chanda B."/>
            <person name="Venugopal S.C."/>
            <person name="Kulshrestha S."/>
            <person name="Navarre D.A."/>
            <person name="Downie B."/>
            <person name="Vaillancourt L."/>
            <person name="Kachroo A."/>
            <person name="Kachroo P."/>
        </authorList>
    </citation>
    <scope>FUNCTION</scope>
</reference>
<reference key="19">
    <citation type="journal article" date="2009" name="Plant Cell">
        <title>The multifunctional enzyme CYP71B15 (PHYTOALEXIN DEFICIENT3) converts cysteine-indole-3-acetonitrile to camalexin in the indole-3-acetonitrile metabolic network of Arabidopsis thaliana.</title>
        <authorList>
            <person name="Boettcher C."/>
            <person name="Westphal L."/>
            <person name="Schmotz C."/>
            <person name="Prade E."/>
            <person name="Scheel D."/>
            <person name="Glawischnig E."/>
        </authorList>
    </citation>
    <scope>FUNCTION</scope>
    <scope>CATALYTIC ACTIVITY</scope>
</reference>
<reference key="20">
    <citation type="journal article" date="2009" name="Plant J.">
        <title>The ABC transporter BcatrB from Botrytis cinerea exports camalexin and is a virulence factor on Arabidopsis thaliana.</title>
        <authorList>
            <person name="Stefanato F.L."/>
            <person name="Abou-Mansour E."/>
            <person name="Buchala A."/>
            <person name="Kretschmer M."/>
            <person name="Mosbach A."/>
            <person name="Hahn M."/>
            <person name="Bochet C.G."/>
            <person name="Metraux J.P."/>
            <person name="Schoonbeek H.J."/>
        </authorList>
    </citation>
    <scope>FUNCTION</scope>
    <scope>INDUCTION</scope>
</reference>
<feature type="chain" id="PRO_0000052093" description="Bifunctional dihydrocamalexate synthase/camalexin synthase">
    <location>
        <begin position="1"/>
        <end position="490"/>
    </location>
</feature>
<feature type="transmembrane region" description="Helical" evidence="1">
    <location>
        <begin position="1"/>
        <end position="21"/>
    </location>
</feature>
<feature type="mutagenesis site" description="In pad3-2." evidence="3">
    <original>G</original>
    <variation>E</variation>
    <location>
        <position position="176"/>
    </location>
</feature>
<name>C71BF_ARATH</name>